<sequence length="305" mass="32904">MTTTTSVLHTSALTSLPLLARGKVRDNYAVGNDRLLMVASDRLSAFDVILGEPIPGKGALLTQMALFWFDKLGSICPNHLTGEAPESVVTAAEIPQVAGRSMLVKRLKPIPVEAVVRGYLAGSGWVEYQQSQSVCGVPLPAGLKNASKLPEPIFTPAAKAEVGEHDENISYEQVVKVVGPELAAQIKTLSIAIYETAAAFALTKGIIIADTKFEFGLDENGTLTLMDEVLTPDSSRYWPVEGYEAAFAAGQNPPSYDKQFVRDWLEAVRINGKPWDKTPPSPHLPPDVISKTAAKYQEAMARLTA</sequence>
<accession>A1VU36</accession>
<gene>
    <name evidence="1" type="primary">purC</name>
    <name type="ordered locus">Pnap_3868</name>
</gene>
<comment type="catalytic activity">
    <reaction evidence="1">
        <text>5-amino-1-(5-phospho-D-ribosyl)imidazole-4-carboxylate + L-aspartate + ATP = (2S)-2-[5-amino-1-(5-phospho-beta-D-ribosyl)imidazole-4-carboxamido]succinate + ADP + phosphate + 2 H(+)</text>
        <dbReference type="Rhea" id="RHEA:22628"/>
        <dbReference type="ChEBI" id="CHEBI:15378"/>
        <dbReference type="ChEBI" id="CHEBI:29991"/>
        <dbReference type="ChEBI" id="CHEBI:30616"/>
        <dbReference type="ChEBI" id="CHEBI:43474"/>
        <dbReference type="ChEBI" id="CHEBI:58443"/>
        <dbReference type="ChEBI" id="CHEBI:77657"/>
        <dbReference type="ChEBI" id="CHEBI:456216"/>
        <dbReference type="EC" id="6.3.2.6"/>
    </reaction>
</comment>
<comment type="pathway">
    <text evidence="1">Purine metabolism; IMP biosynthesis via de novo pathway; 5-amino-1-(5-phospho-D-ribosyl)imidazole-4-carboxamide from 5-amino-1-(5-phospho-D-ribosyl)imidazole-4-carboxylate: step 1/2.</text>
</comment>
<comment type="similarity">
    <text evidence="1">Belongs to the SAICAR synthetase family.</text>
</comment>
<keyword id="KW-0067">ATP-binding</keyword>
<keyword id="KW-0436">Ligase</keyword>
<keyword id="KW-0547">Nucleotide-binding</keyword>
<keyword id="KW-0658">Purine biosynthesis</keyword>
<keyword id="KW-1185">Reference proteome</keyword>
<feature type="chain" id="PRO_1000076460" description="Phosphoribosylaminoimidazole-succinocarboxamide synthase">
    <location>
        <begin position="1"/>
        <end position="305"/>
    </location>
</feature>
<reference key="1">
    <citation type="journal article" date="2009" name="Environ. Microbiol.">
        <title>The genome of Polaromonas naphthalenivorans strain CJ2, isolated from coal tar-contaminated sediment, reveals physiological and metabolic versatility and evolution through extensive horizontal gene transfer.</title>
        <authorList>
            <person name="Yagi J.M."/>
            <person name="Sims D."/>
            <person name="Brettin T."/>
            <person name="Bruce D."/>
            <person name="Madsen E.L."/>
        </authorList>
    </citation>
    <scope>NUCLEOTIDE SEQUENCE [LARGE SCALE GENOMIC DNA]</scope>
    <source>
        <strain>CJ2</strain>
    </source>
</reference>
<dbReference type="EC" id="6.3.2.6" evidence="1"/>
<dbReference type="EMBL" id="CP000529">
    <property type="protein sequence ID" value="ABM39164.1"/>
    <property type="molecule type" value="Genomic_DNA"/>
</dbReference>
<dbReference type="RefSeq" id="WP_011803230.1">
    <property type="nucleotide sequence ID" value="NC_008781.1"/>
</dbReference>
<dbReference type="SMR" id="A1VU36"/>
<dbReference type="STRING" id="365044.Pnap_3868"/>
<dbReference type="KEGG" id="pna:Pnap_3868"/>
<dbReference type="eggNOG" id="COG0152">
    <property type="taxonomic scope" value="Bacteria"/>
</dbReference>
<dbReference type="HOGENOM" id="CLU_045637_0_0_4"/>
<dbReference type="OrthoDB" id="9801549at2"/>
<dbReference type="UniPathway" id="UPA00074">
    <property type="reaction ID" value="UER00131"/>
</dbReference>
<dbReference type="Proteomes" id="UP000000644">
    <property type="component" value="Chromosome"/>
</dbReference>
<dbReference type="GO" id="GO:0005737">
    <property type="term" value="C:cytoplasm"/>
    <property type="evidence" value="ECO:0007669"/>
    <property type="project" value="TreeGrafter"/>
</dbReference>
<dbReference type="GO" id="GO:0005524">
    <property type="term" value="F:ATP binding"/>
    <property type="evidence" value="ECO:0007669"/>
    <property type="project" value="UniProtKB-KW"/>
</dbReference>
<dbReference type="GO" id="GO:0004639">
    <property type="term" value="F:phosphoribosylaminoimidazolesuccinocarboxamide synthase activity"/>
    <property type="evidence" value="ECO:0007669"/>
    <property type="project" value="UniProtKB-UniRule"/>
</dbReference>
<dbReference type="GO" id="GO:0006189">
    <property type="term" value="P:'de novo' IMP biosynthetic process"/>
    <property type="evidence" value="ECO:0007669"/>
    <property type="project" value="UniProtKB-UniRule"/>
</dbReference>
<dbReference type="CDD" id="cd01414">
    <property type="entry name" value="SAICAR_synt_Sc"/>
    <property type="match status" value="1"/>
</dbReference>
<dbReference type="FunFam" id="3.30.470.20:FF:000015">
    <property type="entry name" value="Phosphoribosylaminoimidazole-succinocarboxamide synthase"/>
    <property type="match status" value="1"/>
</dbReference>
<dbReference type="Gene3D" id="3.30.470.20">
    <property type="entry name" value="ATP-grasp fold, B domain"/>
    <property type="match status" value="1"/>
</dbReference>
<dbReference type="Gene3D" id="3.30.200.20">
    <property type="entry name" value="Phosphorylase Kinase, domain 1"/>
    <property type="match status" value="1"/>
</dbReference>
<dbReference type="HAMAP" id="MF_00137">
    <property type="entry name" value="SAICAR_synth"/>
    <property type="match status" value="1"/>
</dbReference>
<dbReference type="InterPro" id="IPR028923">
    <property type="entry name" value="SAICAR_synt/ADE2_N"/>
</dbReference>
<dbReference type="InterPro" id="IPR001636">
    <property type="entry name" value="SAICAR_synth"/>
</dbReference>
<dbReference type="InterPro" id="IPR018236">
    <property type="entry name" value="SAICAR_synthetase_CS"/>
</dbReference>
<dbReference type="NCBIfam" id="NF010568">
    <property type="entry name" value="PRK13961.1"/>
    <property type="match status" value="1"/>
</dbReference>
<dbReference type="NCBIfam" id="TIGR00081">
    <property type="entry name" value="purC"/>
    <property type="match status" value="1"/>
</dbReference>
<dbReference type="PANTHER" id="PTHR43700">
    <property type="entry name" value="PHOSPHORIBOSYLAMINOIMIDAZOLE-SUCCINOCARBOXAMIDE SYNTHASE"/>
    <property type="match status" value="1"/>
</dbReference>
<dbReference type="PANTHER" id="PTHR43700:SF1">
    <property type="entry name" value="PHOSPHORIBOSYLAMINOIMIDAZOLE-SUCCINOCARBOXAMIDE SYNTHASE"/>
    <property type="match status" value="1"/>
</dbReference>
<dbReference type="Pfam" id="PF01259">
    <property type="entry name" value="SAICAR_synt"/>
    <property type="match status" value="1"/>
</dbReference>
<dbReference type="SUPFAM" id="SSF56104">
    <property type="entry name" value="SAICAR synthase-like"/>
    <property type="match status" value="1"/>
</dbReference>
<dbReference type="PROSITE" id="PS01057">
    <property type="entry name" value="SAICAR_SYNTHETASE_1"/>
    <property type="match status" value="1"/>
</dbReference>
<dbReference type="PROSITE" id="PS01058">
    <property type="entry name" value="SAICAR_SYNTHETASE_2"/>
    <property type="match status" value="1"/>
</dbReference>
<evidence type="ECO:0000255" key="1">
    <source>
        <dbReference type="HAMAP-Rule" id="MF_00137"/>
    </source>
</evidence>
<organism>
    <name type="scientific">Polaromonas naphthalenivorans (strain CJ2)</name>
    <dbReference type="NCBI Taxonomy" id="365044"/>
    <lineage>
        <taxon>Bacteria</taxon>
        <taxon>Pseudomonadati</taxon>
        <taxon>Pseudomonadota</taxon>
        <taxon>Betaproteobacteria</taxon>
        <taxon>Burkholderiales</taxon>
        <taxon>Comamonadaceae</taxon>
        <taxon>Polaromonas</taxon>
    </lineage>
</organism>
<protein>
    <recommendedName>
        <fullName evidence="1">Phosphoribosylaminoimidazole-succinocarboxamide synthase</fullName>
        <ecNumber evidence="1">6.3.2.6</ecNumber>
    </recommendedName>
    <alternativeName>
        <fullName evidence="1">SAICAR synthetase</fullName>
    </alternativeName>
</protein>
<name>PUR7_POLNA</name>
<proteinExistence type="inferred from homology"/>